<feature type="chain" id="PRO_0000163309" description="Ribosome maturation factor RimM">
    <location>
        <begin position="1"/>
        <end position="217"/>
    </location>
</feature>
<feature type="domain" description="PRC barrel" evidence="1">
    <location>
        <begin position="115"/>
        <end position="186"/>
    </location>
</feature>
<feature type="region of interest" description="Disordered" evidence="2">
    <location>
        <begin position="181"/>
        <end position="217"/>
    </location>
</feature>
<accession>Q6AEA0</accession>
<reference key="1">
    <citation type="journal article" date="2004" name="Mol. Plant Microbe Interact.">
        <title>The genome sequence of the Gram-positive sugarcane pathogen Leifsonia xyli subsp. xyli.</title>
        <authorList>
            <person name="Monteiro-Vitorello C.B."/>
            <person name="Camargo L.E.A."/>
            <person name="Van Sluys M.A."/>
            <person name="Kitajima J.P."/>
            <person name="Truffi D."/>
            <person name="do Amaral A.M."/>
            <person name="Harakava R."/>
            <person name="de Oliveira J.C.F."/>
            <person name="Wood D."/>
            <person name="de Oliveira M.C."/>
            <person name="Miyaki C.Y."/>
            <person name="Takita M.A."/>
            <person name="da Silva A.C.R."/>
            <person name="Furlan L.R."/>
            <person name="Carraro D.M."/>
            <person name="Camarotte G."/>
            <person name="Almeida N.F. Jr."/>
            <person name="Carrer H."/>
            <person name="Coutinho L.L."/>
            <person name="El-Dorry H.A."/>
            <person name="Ferro M.I.T."/>
            <person name="Gagliardi P.R."/>
            <person name="Giglioti E."/>
            <person name="Goldman M.H.S."/>
            <person name="Goldman G.H."/>
            <person name="Kimura E.T."/>
            <person name="Ferro E.S."/>
            <person name="Kuramae E.E."/>
            <person name="Lemos E.G.M."/>
            <person name="Lemos M.V.F."/>
            <person name="Mauro S.M.Z."/>
            <person name="Machado M.A."/>
            <person name="Marino C.L."/>
            <person name="Menck C.F."/>
            <person name="Nunes L.R."/>
            <person name="Oliveira R.C."/>
            <person name="Pereira G.G."/>
            <person name="Siqueira W."/>
            <person name="de Souza A.A."/>
            <person name="Tsai S.M."/>
            <person name="Zanca A.S."/>
            <person name="Simpson A.J.G."/>
            <person name="Brumbley S.M."/>
            <person name="Setubal J.C."/>
        </authorList>
    </citation>
    <scope>NUCLEOTIDE SEQUENCE [LARGE SCALE GENOMIC DNA]</scope>
    <source>
        <strain>CTCB07</strain>
    </source>
</reference>
<evidence type="ECO:0000255" key="1">
    <source>
        <dbReference type="HAMAP-Rule" id="MF_00014"/>
    </source>
</evidence>
<evidence type="ECO:0000256" key="2">
    <source>
        <dbReference type="SAM" id="MobiDB-lite"/>
    </source>
</evidence>
<gene>
    <name evidence="1" type="primary">rimM</name>
    <name type="ordered locus">Lxx14880</name>
</gene>
<proteinExistence type="inferred from homology"/>
<dbReference type="EMBL" id="AE016822">
    <property type="protein sequence ID" value="AAT89296.1"/>
    <property type="molecule type" value="Genomic_DNA"/>
</dbReference>
<dbReference type="RefSeq" id="WP_011186287.1">
    <property type="nucleotide sequence ID" value="NC_006087.1"/>
</dbReference>
<dbReference type="SMR" id="Q6AEA0"/>
<dbReference type="STRING" id="281090.Lxx14880"/>
<dbReference type="KEGG" id="lxx:Lxx14880"/>
<dbReference type="eggNOG" id="COG0806">
    <property type="taxonomic scope" value="Bacteria"/>
</dbReference>
<dbReference type="HOGENOM" id="CLU_077636_0_0_11"/>
<dbReference type="Proteomes" id="UP000001306">
    <property type="component" value="Chromosome"/>
</dbReference>
<dbReference type="GO" id="GO:0005737">
    <property type="term" value="C:cytoplasm"/>
    <property type="evidence" value="ECO:0007669"/>
    <property type="project" value="UniProtKB-SubCell"/>
</dbReference>
<dbReference type="GO" id="GO:0005840">
    <property type="term" value="C:ribosome"/>
    <property type="evidence" value="ECO:0007669"/>
    <property type="project" value="InterPro"/>
</dbReference>
<dbReference type="GO" id="GO:0043022">
    <property type="term" value="F:ribosome binding"/>
    <property type="evidence" value="ECO:0007669"/>
    <property type="project" value="InterPro"/>
</dbReference>
<dbReference type="GO" id="GO:0042274">
    <property type="term" value="P:ribosomal small subunit biogenesis"/>
    <property type="evidence" value="ECO:0007669"/>
    <property type="project" value="UniProtKB-UniRule"/>
</dbReference>
<dbReference type="GO" id="GO:0006364">
    <property type="term" value="P:rRNA processing"/>
    <property type="evidence" value="ECO:0007669"/>
    <property type="project" value="UniProtKB-UniRule"/>
</dbReference>
<dbReference type="Gene3D" id="2.30.30.240">
    <property type="entry name" value="PRC-barrel domain"/>
    <property type="match status" value="1"/>
</dbReference>
<dbReference type="Gene3D" id="2.40.30.60">
    <property type="entry name" value="RimM"/>
    <property type="match status" value="1"/>
</dbReference>
<dbReference type="HAMAP" id="MF_00014">
    <property type="entry name" value="Ribosome_mat_RimM"/>
    <property type="match status" value="1"/>
</dbReference>
<dbReference type="InterPro" id="IPR011033">
    <property type="entry name" value="PRC_barrel-like_sf"/>
</dbReference>
<dbReference type="InterPro" id="IPR056792">
    <property type="entry name" value="PRC_RimM"/>
</dbReference>
<dbReference type="InterPro" id="IPR011961">
    <property type="entry name" value="RimM"/>
</dbReference>
<dbReference type="InterPro" id="IPR002676">
    <property type="entry name" value="RimM_N"/>
</dbReference>
<dbReference type="InterPro" id="IPR036976">
    <property type="entry name" value="RimM_N_sf"/>
</dbReference>
<dbReference type="InterPro" id="IPR009000">
    <property type="entry name" value="Transl_B-barrel_sf"/>
</dbReference>
<dbReference type="NCBIfam" id="TIGR02273">
    <property type="entry name" value="16S_RimM"/>
    <property type="match status" value="1"/>
</dbReference>
<dbReference type="PANTHER" id="PTHR33692">
    <property type="entry name" value="RIBOSOME MATURATION FACTOR RIMM"/>
    <property type="match status" value="1"/>
</dbReference>
<dbReference type="PANTHER" id="PTHR33692:SF1">
    <property type="entry name" value="RIBOSOME MATURATION FACTOR RIMM"/>
    <property type="match status" value="1"/>
</dbReference>
<dbReference type="Pfam" id="PF24986">
    <property type="entry name" value="PRC_RimM"/>
    <property type="match status" value="1"/>
</dbReference>
<dbReference type="Pfam" id="PF01782">
    <property type="entry name" value="RimM"/>
    <property type="match status" value="1"/>
</dbReference>
<dbReference type="SUPFAM" id="SSF50346">
    <property type="entry name" value="PRC-barrel domain"/>
    <property type="match status" value="1"/>
</dbReference>
<dbReference type="SUPFAM" id="SSF50447">
    <property type="entry name" value="Translation proteins"/>
    <property type="match status" value="1"/>
</dbReference>
<protein>
    <recommendedName>
        <fullName evidence="1">Ribosome maturation factor RimM</fullName>
    </recommendedName>
</protein>
<organism>
    <name type="scientific">Leifsonia xyli subsp. xyli (strain CTCB07)</name>
    <dbReference type="NCBI Taxonomy" id="281090"/>
    <lineage>
        <taxon>Bacteria</taxon>
        <taxon>Bacillati</taxon>
        <taxon>Actinomycetota</taxon>
        <taxon>Actinomycetes</taxon>
        <taxon>Micrococcales</taxon>
        <taxon>Microbacteriaceae</taxon>
        <taxon>Leifsonia</taxon>
    </lineage>
</organism>
<keyword id="KW-0143">Chaperone</keyword>
<keyword id="KW-0963">Cytoplasm</keyword>
<keyword id="KW-1185">Reference proteome</keyword>
<keyword id="KW-0690">Ribosome biogenesis</keyword>
<keyword id="KW-0698">rRNA processing</keyword>
<name>RIMM_LEIXX</name>
<sequence>MADHKLPRKEVAPRPDQTELRVGRLTKAHGLKGAIKLELFTDEPGKRFVPGAVFTLQVPTASKWHGKTLALRELRWYNGHPVGFFDGVDDRTEAESLVKAILWVNQDVRELPDEEDAWYDNQLVGLSAHRDGAVVGAIVRVDHLPGQDLLAIKTPGGEVLVPFVKAIVPEVDLAARTVTLTPPPGLFEDLPDDAPAAGDESEPVSPPVTAEETPGGE</sequence>
<comment type="function">
    <text evidence="1">An accessory protein needed during the final step in the assembly of 30S ribosomal subunit, possibly for assembly of the head region. Essential for efficient processing of 16S rRNA. May be needed both before and after RbfA during the maturation of 16S rRNA. It has affinity for free ribosomal 30S subunits but not for 70S ribosomes.</text>
</comment>
<comment type="subunit">
    <text evidence="1">Binds ribosomal protein uS19.</text>
</comment>
<comment type="subcellular location">
    <subcellularLocation>
        <location evidence="1">Cytoplasm</location>
    </subcellularLocation>
</comment>
<comment type="domain">
    <text evidence="1">The PRC barrel domain binds ribosomal protein uS19.</text>
</comment>
<comment type="similarity">
    <text evidence="1">Belongs to the RimM family.</text>
</comment>